<gene>
    <name type="primary">MMP20</name>
</gene>
<protein>
    <recommendedName>
        <fullName>Matrix metalloproteinase-20</fullName>
        <shortName>MMP-20</shortName>
        <ecNumber>3.4.24.-</ecNumber>
    </recommendedName>
    <alternativeName>
        <fullName>Enamel metalloproteinase</fullName>
    </alternativeName>
    <alternativeName>
        <fullName>Enamelysin</fullName>
    </alternativeName>
</protein>
<organism>
    <name type="scientific">Homo sapiens</name>
    <name type="common">Human</name>
    <dbReference type="NCBI Taxonomy" id="9606"/>
    <lineage>
        <taxon>Eukaryota</taxon>
        <taxon>Metazoa</taxon>
        <taxon>Chordata</taxon>
        <taxon>Craniata</taxon>
        <taxon>Vertebrata</taxon>
        <taxon>Euteleostomi</taxon>
        <taxon>Mammalia</taxon>
        <taxon>Eutheria</taxon>
        <taxon>Euarchontoglires</taxon>
        <taxon>Primates</taxon>
        <taxon>Haplorrhini</taxon>
        <taxon>Catarrhini</taxon>
        <taxon>Hominidae</taxon>
        <taxon>Homo</taxon>
    </lineage>
</organism>
<reference key="1">
    <citation type="journal article" date="1997" name="Biochemistry">
        <title>Identification and structural and functional characterization of human enamelysin (MMP-20).</title>
        <authorList>
            <person name="Llano E."/>
            <person name="Pendas A.M."/>
            <person name="Knaeuper V."/>
            <person name="Sorsa T."/>
            <person name="Salo T."/>
            <person name="Salido E."/>
            <person name="Murphy G."/>
            <person name="Simmer J.P."/>
            <person name="Bartlett J.D."/>
            <person name="Lopez-Otin C."/>
        </authorList>
    </citation>
    <scope>NUCLEOTIDE SEQUENCE [MRNA]</scope>
    <scope>FUNCTION</scope>
    <source>
        <tissue>Odontoblast</tissue>
    </source>
</reference>
<reference key="2">
    <citation type="submission" date="2004-07" db="EMBL/GenBank/DDBJ databases">
        <authorList>
            <consortium name="NIEHS SNPs program"/>
        </authorList>
    </citation>
    <scope>NUCLEOTIDE SEQUENCE [GENOMIC DNA]</scope>
    <scope>VARIANTS THR-18; ASN-139; LEU-169; ALA-275 AND ASN-281</scope>
</reference>
<reference key="3">
    <citation type="journal article" date="2006" name="Nature">
        <title>Human chromosome 11 DNA sequence and analysis including novel gene identification.</title>
        <authorList>
            <person name="Taylor T.D."/>
            <person name="Noguchi H."/>
            <person name="Totoki Y."/>
            <person name="Toyoda A."/>
            <person name="Kuroki Y."/>
            <person name="Dewar K."/>
            <person name="Lloyd C."/>
            <person name="Itoh T."/>
            <person name="Takeda T."/>
            <person name="Kim D.-W."/>
            <person name="She X."/>
            <person name="Barlow K.F."/>
            <person name="Bloom T."/>
            <person name="Bruford E."/>
            <person name="Chang J.L."/>
            <person name="Cuomo C.A."/>
            <person name="Eichler E."/>
            <person name="FitzGerald M.G."/>
            <person name="Jaffe D.B."/>
            <person name="LaButti K."/>
            <person name="Nicol R."/>
            <person name="Park H.-S."/>
            <person name="Seaman C."/>
            <person name="Sougnez C."/>
            <person name="Yang X."/>
            <person name="Zimmer A.R."/>
            <person name="Zody M.C."/>
            <person name="Birren B.W."/>
            <person name="Nusbaum C."/>
            <person name="Fujiyama A."/>
            <person name="Hattori M."/>
            <person name="Rogers J."/>
            <person name="Lander E.S."/>
            <person name="Sakaki Y."/>
        </authorList>
    </citation>
    <scope>NUCLEOTIDE SEQUENCE [LARGE SCALE GENOMIC DNA]</scope>
</reference>
<reference key="4">
    <citation type="journal article" date="2000" name="FEBS Lett.">
        <title>Matrix metalloproteinases 19 and 20 cleave aggrecan and cartilage oligomeric matrix protein (COMP).</title>
        <authorList>
            <person name="Stracke J.O."/>
            <person name="Fosang A.J."/>
            <person name="Last K."/>
            <person name="Mercuri F.A."/>
            <person name="Pendas A.M."/>
            <person name="Llano E."/>
            <person name="Perris R."/>
            <person name="Di Cesare P.E."/>
            <person name="Murphy G."/>
            <person name="Knaeuper V."/>
        </authorList>
    </citation>
    <scope>FUNCTION</scope>
</reference>
<reference key="5">
    <citation type="journal article" date="2005" name="J. Med. Genet.">
        <title>MMP-20 mutation in autosomal recessive pigmented hypomaturation amelogenesis imperfecta.</title>
        <authorList>
            <person name="Kim J.-W."/>
            <person name="Simmer J.P."/>
            <person name="Hart T.C."/>
            <person name="Hart P.S."/>
            <person name="Ramaswami M.D."/>
            <person name="Bartlett J.D."/>
            <person name="Hu J.C.-C."/>
        </authorList>
    </citation>
    <scope>INVOLVEMENT IN AI2A2</scope>
</reference>
<reference key="6">
    <citation type="journal article" date="2007" name="FEBS Lett.">
        <title>Catalytic domain of MMP20 (Enamelysin) - the NMR structure of a new matrix metalloproteinase.</title>
        <authorList>
            <person name="Arendt Y."/>
            <person name="Banci L."/>
            <person name="Bertini I."/>
            <person name="Cantini F."/>
            <person name="Cozzi R."/>
            <person name="Del Conte R."/>
            <person name="Gonnelli L."/>
        </authorList>
    </citation>
    <scope>STRUCTURE BY NMR OF 113-272 IN COMPLEX WITH INHIBITOR</scope>
    <scope>COFACTOR</scope>
    <scope>ZINC-BINDING SITES</scope>
    <scope>CALCIUM-BINDING SITES</scope>
</reference>
<accession>O60882</accession>
<accession>Q6DKT9</accession>
<comment type="function">
    <text evidence="4 7">Degrades amelogenin, the major protein component of the enamel matrix and two of the macromolecules characterizing the cartilage extracellular matrix: aggrecan and the cartilage oligomeric matrix protein (COMP). May play a central role in tooth enamel formation. Cleaves aggrecan at the '360-Asn-|-Phe-361' site.</text>
</comment>
<comment type="cofactor">
    <cofactor evidence="6">
        <name>Zn(2+)</name>
        <dbReference type="ChEBI" id="CHEBI:29105"/>
    </cofactor>
    <text evidence="6">Binds 2 Zn(2+) ions per subunit.</text>
</comment>
<comment type="cofactor">
    <cofactor evidence="6">
        <name>Ca(2+)</name>
        <dbReference type="ChEBI" id="CHEBI:29108"/>
    </cofactor>
    <text evidence="6">Binds 2 calcium ions per subunit.</text>
</comment>
<comment type="subcellular location">
    <subcellularLocation>
        <location evidence="1">Secreted</location>
        <location evidence="1">Extracellular space</location>
        <location evidence="1">Extracellular matrix</location>
    </subcellularLocation>
</comment>
<comment type="tissue specificity">
    <text>Expressed specifically in the enamel organ.</text>
</comment>
<comment type="developmental stage">
    <text>Expression initiates prior to the onset of dentin mineralization and continues throughout the secretory stage of amelogenesis.</text>
</comment>
<comment type="domain">
    <text>The conserved cysteine present in the cysteine-switch motif binds the catalytic zinc ion, thus inhibiting the enzyme. The dissociation of the cysteine from the zinc ion upon the activation-peptide release activates the enzyme.</text>
</comment>
<comment type="PTM">
    <text evidence="1">Autoactivates at least at the 107-Asn-|-Tyr-108 site.</text>
</comment>
<comment type="disease" evidence="5">
    <disease id="DI-00092">
        <name>Amelogenesis imperfecta, hypomaturation type, 2A2</name>
        <acronym>AI2A2</acronym>
        <description>A defect of enamel formation. The disorder involves both primary and secondary dentitions. The teeth have a shiny agar jelly appearance and the enamel is softer than normal. Brown pigment is present in middle layers of enamel.</description>
        <dbReference type="MIM" id="612529"/>
    </disease>
    <text>The disease is caused by variants affecting the gene represented in this entry.</text>
</comment>
<comment type="similarity">
    <text evidence="9">Belongs to the peptidase M10A family.</text>
</comment>
<evidence type="ECO:0000250" key="1"/>
<evidence type="ECO:0000255" key="2"/>
<evidence type="ECO:0000255" key="3">
    <source>
        <dbReference type="PROSITE-ProRule" id="PRU10095"/>
    </source>
</evidence>
<evidence type="ECO:0000269" key="4">
    <source>
    </source>
</evidence>
<evidence type="ECO:0000269" key="5">
    <source>
    </source>
</evidence>
<evidence type="ECO:0000269" key="6">
    <source>
    </source>
</evidence>
<evidence type="ECO:0000269" key="7">
    <source>
    </source>
</evidence>
<evidence type="ECO:0000269" key="8">
    <source ref="2"/>
</evidence>
<evidence type="ECO:0000305" key="9"/>
<evidence type="ECO:0007829" key="10">
    <source>
        <dbReference type="PDB" id="2JSD"/>
    </source>
</evidence>
<name>MMP20_HUMAN</name>
<sequence>MKVLPASGLAVFLIMALKFSTAAPSLVAASPRTWRNNYRLAQAYLDKYYTNKEGHQIGEMVARGSNSMIRKIKELQAFFGLQVTGKLDQTTMNVIKKPRCGVPDVANYRLFPGEPKWKKNTLTYRISKYTPSMSSVEVDKAVEMALQAWSSAVPLSFVRINSGEADIMISFENGDHGDSYPFDGPRGTLAHAFAPGEGLGGDTHFDNAEKWTMGTNGFNLFTVAAHEFGHALGLAHSTDPSALMYPTYKYKNPYGFHLPKDDVKGIQALYGPRKVFLGKPTLPHAPHHKPSIPDLCDSSSSFDAVTMLGKELLLFKDRIFWRRQVHLRTGIRPSTITSSFPQLMSNVDAAYEVAERGTAYFFKGPHYWITRGFQMQGPPRTIYDFGFPRHVQQIDAAVYLREPQKTLFFVGDEYYSYDERKRKMEKDYPKNTEEEFSGVNGQIDAAVELNGYIYFFSGPKTYKYDTEKEDVVSVVKSSSWIGC</sequence>
<keyword id="KW-0002">3D-structure</keyword>
<keyword id="KW-0986">Amelogenesis imperfecta</keyword>
<keyword id="KW-0068">Autocatalytic cleavage</keyword>
<keyword id="KW-0106">Calcium</keyword>
<keyword id="KW-1015">Disulfide bond</keyword>
<keyword id="KW-0272">Extracellular matrix</keyword>
<keyword id="KW-0378">Hydrolase</keyword>
<keyword id="KW-0479">Metal-binding</keyword>
<keyword id="KW-0482">Metalloprotease</keyword>
<keyword id="KW-0645">Protease</keyword>
<keyword id="KW-1185">Reference proteome</keyword>
<keyword id="KW-0677">Repeat</keyword>
<keyword id="KW-0964">Secreted</keyword>
<keyword id="KW-0732">Signal</keyword>
<keyword id="KW-0862">Zinc</keyword>
<keyword id="KW-0865">Zymogen</keyword>
<feature type="signal peptide" evidence="2">
    <location>
        <begin position="1"/>
        <end position="22"/>
    </location>
</feature>
<feature type="propeptide" id="PRO_0000028833" evidence="1">
    <location>
        <begin position="23"/>
        <end position="107"/>
    </location>
</feature>
<feature type="chain" id="PRO_0000028834" description="Matrix metalloproteinase-20">
    <location>
        <begin position="108"/>
        <end position="483"/>
    </location>
</feature>
<feature type="repeat" description="Hemopexin 1">
    <location>
        <begin position="293"/>
        <end position="343"/>
    </location>
</feature>
<feature type="repeat" description="Hemopexin 2">
    <location>
        <begin position="344"/>
        <end position="389"/>
    </location>
</feature>
<feature type="repeat" description="Hemopexin 3">
    <location>
        <begin position="391"/>
        <end position="439"/>
    </location>
</feature>
<feature type="repeat" description="Hemopexin 4">
    <location>
        <begin position="440"/>
        <end position="483"/>
    </location>
</feature>
<feature type="short sequence motif" description="Cysteine switch" evidence="1">
    <location>
        <begin position="98"/>
        <end position="105"/>
    </location>
</feature>
<feature type="active site" evidence="3">
    <location>
        <position position="227"/>
    </location>
</feature>
<feature type="binding site" description="in inhibited form" evidence="1">
    <location>
        <position position="100"/>
    </location>
    <ligand>
        <name>Zn(2+)</name>
        <dbReference type="ChEBI" id="CHEBI:29105"/>
        <label>1</label>
        <note>catalytic</note>
    </ligand>
</feature>
<feature type="binding site">
    <location>
        <position position="164"/>
    </location>
    <ligand>
        <name>Ca(2+)</name>
        <dbReference type="ChEBI" id="CHEBI:29108"/>
        <label>1</label>
    </ligand>
</feature>
<feature type="binding site">
    <location>
        <position position="165"/>
    </location>
    <ligand>
        <name>Ca(2+)</name>
        <dbReference type="ChEBI" id="CHEBI:29108"/>
        <label>1</label>
    </ligand>
</feature>
<feature type="binding site">
    <location>
        <position position="166"/>
    </location>
    <ligand>
        <name>Ca(2+)</name>
        <dbReference type="ChEBI" id="CHEBI:29108"/>
        <label>1</label>
    </ligand>
</feature>
<feature type="binding site">
    <location>
        <position position="176"/>
    </location>
    <ligand>
        <name>Zn(2+)</name>
        <dbReference type="ChEBI" id="CHEBI:29105"/>
        <label>2</label>
    </ligand>
</feature>
<feature type="binding site">
    <location>
        <position position="178"/>
    </location>
    <ligand>
        <name>Zn(2+)</name>
        <dbReference type="ChEBI" id="CHEBI:29105"/>
        <label>2</label>
    </ligand>
</feature>
<feature type="binding site">
    <location>
        <position position="183"/>
    </location>
    <ligand>
        <name>Ca(2+)</name>
        <dbReference type="ChEBI" id="CHEBI:29108"/>
        <label>2</label>
    </ligand>
</feature>
<feature type="binding site">
    <location>
        <position position="184"/>
    </location>
    <ligand>
        <name>Ca(2+)</name>
        <dbReference type="ChEBI" id="CHEBI:29108"/>
        <label>2</label>
    </ligand>
</feature>
<feature type="binding site">
    <location>
        <position position="186"/>
    </location>
    <ligand>
        <name>Ca(2+)</name>
        <dbReference type="ChEBI" id="CHEBI:29108"/>
        <label>2</label>
    </ligand>
</feature>
<feature type="binding site">
    <location>
        <position position="188"/>
    </location>
    <ligand>
        <name>Ca(2+)</name>
        <dbReference type="ChEBI" id="CHEBI:29108"/>
        <label>2</label>
    </ligand>
</feature>
<feature type="binding site">
    <location>
        <position position="191"/>
    </location>
    <ligand>
        <name>Zn(2+)</name>
        <dbReference type="ChEBI" id="CHEBI:29105"/>
        <label>2</label>
    </ligand>
</feature>
<feature type="binding site">
    <location>
        <position position="197"/>
    </location>
    <ligand>
        <name>Ca(2+)</name>
        <dbReference type="ChEBI" id="CHEBI:29108"/>
        <label>1</label>
    </ligand>
</feature>
<feature type="binding site">
    <location>
        <position position="198"/>
    </location>
    <ligand>
        <name>Ca(2+)</name>
        <dbReference type="ChEBI" id="CHEBI:29108"/>
        <label>1</label>
    </ligand>
</feature>
<feature type="binding site">
    <location>
        <position position="200"/>
    </location>
    <ligand>
        <name>Ca(2+)</name>
        <dbReference type="ChEBI" id="CHEBI:29108"/>
        <label>1</label>
    </ligand>
</feature>
<feature type="binding site">
    <location>
        <position position="202"/>
    </location>
    <ligand>
        <name>Ca(2+)</name>
        <dbReference type="ChEBI" id="CHEBI:29108"/>
        <label>1</label>
    </ligand>
</feature>
<feature type="binding site">
    <location>
        <position position="204"/>
    </location>
    <ligand>
        <name>Zn(2+)</name>
        <dbReference type="ChEBI" id="CHEBI:29105"/>
        <label>2</label>
    </ligand>
</feature>
<feature type="binding site">
    <location>
        <position position="206"/>
    </location>
    <ligand>
        <name>Ca(2+)</name>
        <dbReference type="ChEBI" id="CHEBI:29108"/>
        <label>2</label>
    </ligand>
</feature>
<feature type="binding site">
    <location>
        <position position="209"/>
    </location>
    <ligand>
        <name>Ca(2+)</name>
        <dbReference type="ChEBI" id="CHEBI:29108"/>
        <label>2</label>
    </ligand>
</feature>
<feature type="binding site">
    <location>
        <position position="226"/>
    </location>
    <ligand>
        <name>Zn(2+)</name>
        <dbReference type="ChEBI" id="CHEBI:29105"/>
        <label>1</label>
        <note>catalytic</note>
    </ligand>
</feature>
<feature type="binding site">
    <location>
        <position position="230"/>
    </location>
    <ligand>
        <name>Zn(2+)</name>
        <dbReference type="ChEBI" id="CHEBI:29105"/>
        <label>1</label>
        <note>catalytic</note>
    </ligand>
</feature>
<feature type="binding site">
    <location>
        <position position="236"/>
    </location>
    <ligand>
        <name>Zn(2+)</name>
        <dbReference type="ChEBI" id="CHEBI:29105"/>
        <label>1</label>
        <note>catalytic</note>
    </ligand>
</feature>
<feature type="disulfide bond" evidence="2">
    <location>
        <begin position="296"/>
        <end position="483"/>
    </location>
</feature>
<feature type="sequence variant" id="VAR_020511" description="In dbSNP:rs2245803." evidence="8">
    <original>K</original>
    <variation>T</variation>
    <location>
        <position position="18"/>
    </location>
</feature>
<feature type="sequence variant" id="VAR_020512" description="In dbSNP:rs17099014." evidence="8">
    <original>D</original>
    <variation>N</variation>
    <location>
        <position position="139"/>
    </location>
</feature>
<feature type="sequence variant" id="VAR_020513" description="In dbSNP:rs17099008." evidence="8">
    <original>I</original>
    <variation>L</variation>
    <location>
        <position position="169"/>
    </location>
</feature>
<feature type="sequence variant" id="VAR_020514" description="In dbSNP:rs1784423." evidence="8">
    <original>V</original>
    <variation>A</variation>
    <location>
        <position position="275"/>
    </location>
</feature>
<feature type="sequence variant" id="VAR_057802" description="In dbSNP:rs1784424." evidence="8">
    <original>T</original>
    <variation>N</variation>
    <location>
        <position position="281"/>
    </location>
</feature>
<feature type="sequence conflict" description="In Ref. 1; CAA73317." evidence="9" ref="1">
    <original>A</original>
    <variation>P</variation>
    <location>
        <position position="208"/>
    </location>
</feature>
<feature type="strand" evidence="10">
    <location>
        <begin position="120"/>
        <end position="126"/>
    </location>
</feature>
<feature type="strand" evidence="10">
    <location>
        <begin position="131"/>
        <end position="133"/>
    </location>
</feature>
<feature type="helix" evidence="10">
    <location>
        <begin position="135"/>
        <end position="152"/>
    </location>
</feature>
<feature type="strand" evidence="10">
    <location>
        <begin position="156"/>
        <end position="159"/>
    </location>
</feature>
<feature type="strand" evidence="10">
    <location>
        <begin position="161"/>
        <end position="163"/>
    </location>
</feature>
<feature type="strand" evidence="10">
    <location>
        <begin position="166"/>
        <end position="172"/>
    </location>
</feature>
<feature type="strand" evidence="10">
    <location>
        <begin position="176"/>
        <end position="180"/>
    </location>
</feature>
<feature type="strand" evidence="10">
    <location>
        <begin position="184"/>
        <end position="187"/>
    </location>
</feature>
<feature type="strand" evidence="10">
    <location>
        <begin position="189"/>
        <end position="192"/>
    </location>
</feature>
<feature type="strand" evidence="10">
    <location>
        <begin position="195"/>
        <end position="199"/>
    </location>
</feature>
<feature type="strand" evidence="10">
    <location>
        <begin position="203"/>
        <end position="206"/>
    </location>
</feature>
<feature type="strand" evidence="10">
    <location>
        <begin position="211"/>
        <end position="219"/>
    </location>
</feature>
<feature type="helix" evidence="10">
    <location>
        <begin position="220"/>
        <end position="232"/>
    </location>
</feature>
<feature type="turn" evidence="10">
    <location>
        <begin position="253"/>
        <end position="255"/>
    </location>
</feature>
<feature type="helix" evidence="10">
    <location>
        <begin position="261"/>
        <end position="270"/>
    </location>
</feature>
<dbReference type="EC" id="3.4.24.-"/>
<dbReference type="EMBL" id="Y12779">
    <property type="protein sequence ID" value="CAA73317.1"/>
    <property type="molecule type" value="mRNA"/>
</dbReference>
<dbReference type="EMBL" id="AY673603">
    <property type="protein sequence ID" value="AAT70722.1"/>
    <property type="molecule type" value="Genomic_DNA"/>
</dbReference>
<dbReference type="EMBL" id="AP000851">
    <property type="status" value="NOT_ANNOTATED_CDS"/>
    <property type="molecule type" value="Genomic_DNA"/>
</dbReference>
<dbReference type="CCDS" id="CCDS8318.1"/>
<dbReference type="RefSeq" id="NP_004762.2">
    <property type="nucleotide sequence ID" value="NM_004771.3"/>
</dbReference>
<dbReference type="PDB" id="2JSD">
    <property type="method" value="NMR"/>
    <property type="chains" value="A=113-272"/>
</dbReference>
<dbReference type="PDBsum" id="2JSD"/>
<dbReference type="BMRB" id="O60882"/>
<dbReference type="SMR" id="O60882"/>
<dbReference type="BioGRID" id="114725">
    <property type="interactions" value="8"/>
</dbReference>
<dbReference type="FunCoup" id="O60882">
    <property type="interactions" value="49"/>
</dbReference>
<dbReference type="STRING" id="9606.ENSP00000260228"/>
<dbReference type="BindingDB" id="O60882"/>
<dbReference type="ChEMBL" id="CHEMBL1938226"/>
<dbReference type="DrugBank" id="DB00786">
    <property type="generic name" value="Marimastat"/>
</dbReference>
<dbReference type="DrugBank" id="DB08271">
    <property type="generic name" value="N-ISOBUTYL-N-[4-METHOXYPHENYLSULFONYL]GLYCYL HYDROXAMIC ACID"/>
</dbReference>
<dbReference type="MEROPS" id="M10.019"/>
<dbReference type="GlyGen" id="O60882">
    <property type="glycosylation" value="2 sites, 1 O-linked glycan (1 site)"/>
</dbReference>
<dbReference type="iPTMnet" id="O60882"/>
<dbReference type="PhosphoSitePlus" id="O60882"/>
<dbReference type="BioMuta" id="MMP20"/>
<dbReference type="MassIVE" id="O60882"/>
<dbReference type="PaxDb" id="9606-ENSP00000260228"/>
<dbReference type="PeptideAtlas" id="O60882"/>
<dbReference type="ProteomicsDB" id="49648"/>
<dbReference type="Antibodypedia" id="31760">
    <property type="antibodies" value="275 antibodies from 29 providers"/>
</dbReference>
<dbReference type="DNASU" id="9313"/>
<dbReference type="Ensembl" id="ENST00000260228.3">
    <property type="protein sequence ID" value="ENSP00000260228.2"/>
    <property type="gene ID" value="ENSG00000137674.4"/>
</dbReference>
<dbReference type="GeneID" id="9313"/>
<dbReference type="KEGG" id="hsa:9313"/>
<dbReference type="MANE-Select" id="ENST00000260228.3">
    <property type="protein sequence ID" value="ENSP00000260228.2"/>
    <property type="RefSeq nucleotide sequence ID" value="NM_004771.4"/>
    <property type="RefSeq protein sequence ID" value="NP_004762.2"/>
</dbReference>
<dbReference type="UCSC" id="uc001phc.3">
    <property type="organism name" value="human"/>
</dbReference>
<dbReference type="AGR" id="HGNC:7167"/>
<dbReference type="CTD" id="9313"/>
<dbReference type="DisGeNET" id="9313"/>
<dbReference type="GeneCards" id="MMP20"/>
<dbReference type="HGNC" id="HGNC:7167">
    <property type="gene designation" value="MMP20"/>
</dbReference>
<dbReference type="HPA" id="ENSG00000137674">
    <property type="expression patterns" value="Not detected"/>
</dbReference>
<dbReference type="MalaCards" id="MMP20"/>
<dbReference type="MIM" id="604629">
    <property type="type" value="gene"/>
</dbReference>
<dbReference type="MIM" id="612529">
    <property type="type" value="phenotype"/>
</dbReference>
<dbReference type="neXtProt" id="NX_O60882"/>
<dbReference type="OpenTargets" id="ENSG00000137674"/>
<dbReference type="Orphanet" id="100033">
    <property type="disease" value="Hypomaturation amelogenesis imperfecta"/>
</dbReference>
<dbReference type="PharmGKB" id="PA30878"/>
<dbReference type="VEuPathDB" id="HostDB:ENSG00000137674"/>
<dbReference type="eggNOG" id="KOG1565">
    <property type="taxonomic scope" value="Eukaryota"/>
</dbReference>
<dbReference type="GeneTree" id="ENSGT00940000161277"/>
<dbReference type="HOGENOM" id="CLU_015489_6_0_1"/>
<dbReference type="InParanoid" id="O60882"/>
<dbReference type="OMA" id="YKNPYGF"/>
<dbReference type="OrthoDB" id="406838at2759"/>
<dbReference type="PAN-GO" id="O60882">
    <property type="GO annotations" value="4 GO annotations based on evolutionary models"/>
</dbReference>
<dbReference type="PhylomeDB" id="O60882"/>
<dbReference type="TreeFam" id="TF315428"/>
<dbReference type="BRENDA" id="3.4.24.B6">
    <property type="organism ID" value="2681"/>
</dbReference>
<dbReference type="PathwayCommons" id="O60882"/>
<dbReference type="Reactome" id="R-HSA-1442490">
    <property type="pathway name" value="Collagen degradation"/>
</dbReference>
<dbReference type="Reactome" id="R-HSA-1474228">
    <property type="pathway name" value="Degradation of the extracellular matrix"/>
</dbReference>
<dbReference type="Reactome" id="R-HSA-2022090">
    <property type="pathway name" value="Assembly of collagen fibrils and other multimeric structures"/>
</dbReference>
<dbReference type="SignaLink" id="O60882"/>
<dbReference type="SIGNOR" id="O60882"/>
<dbReference type="BioGRID-ORCS" id="9313">
    <property type="hits" value="12 hits in 1084 CRISPR screens"/>
</dbReference>
<dbReference type="EvolutionaryTrace" id="O60882"/>
<dbReference type="GeneWiki" id="MMP20"/>
<dbReference type="GenomeRNAi" id="9313"/>
<dbReference type="Pharos" id="O60882">
    <property type="development level" value="Tbio"/>
</dbReference>
<dbReference type="PRO" id="PR:O60882"/>
<dbReference type="Proteomes" id="UP000005640">
    <property type="component" value="Chromosome 11"/>
</dbReference>
<dbReference type="RNAct" id="O60882">
    <property type="molecule type" value="protein"/>
</dbReference>
<dbReference type="Bgee" id="ENSG00000137674">
    <property type="expression patterns" value="Expressed in left testis and 53 other cell types or tissues"/>
</dbReference>
<dbReference type="GO" id="GO:0031012">
    <property type="term" value="C:extracellular matrix"/>
    <property type="evidence" value="ECO:0007669"/>
    <property type="project" value="InterPro"/>
</dbReference>
<dbReference type="GO" id="GO:0005576">
    <property type="term" value="C:extracellular region"/>
    <property type="evidence" value="ECO:0000304"/>
    <property type="project" value="Reactome"/>
</dbReference>
<dbReference type="GO" id="GO:0005615">
    <property type="term" value="C:extracellular space"/>
    <property type="evidence" value="ECO:0000304"/>
    <property type="project" value="ProtInc"/>
</dbReference>
<dbReference type="GO" id="GO:0004222">
    <property type="term" value="F:metalloendopeptidase activity"/>
    <property type="evidence" value="ECO:0000314"/>
    <property type="project" value="CACAO"/>
</dbReference>
<dbReference type="GO" id="GO:0008270">
    <property type="term" value="F:zinc ion binding"/>
    <property type="evidence" value="ECO:0000304"/>
    <property type="project" value="ProtInc"/>
</dbReference>
<dbReference type="GO" id="GO:0097186">
    <property type="term" value="P:amelogenesis"/>
    <property type="evidence" value="ECO:0000318"/>
    <property type="project" value="GO_Central"/>
</dbReference>
<dbReference type="GO" id="GO:0030574">
    <property type="term" value="P:collagen catabolic process"/>
    <property type="evidence" value="ECO:0000318"/>
    <property type="project" value="GO_Central"/>
</dbReference>
<dbReference type="GO" id="GO:0022617">
    <property type="term" value="P:extracellular matrix disassembly"/>
    <property type="evidence" value="ECO:0007669"/>
    <property type="project" value="Ensembl"/>
</dbReference>
<dbReference type="GO" id="GO:0030198">
    <property type="term" value="P:extracellular matrix organization"/>
    <property type="evidence" value="ECO:0000318"/>
    <property type="project" value="GO_Central"/>
</dbReference>
<dbReference type="GO" id="GO:0030163">
    <property type="term" value="P:protein catabolic process"/>
    <property type="evidence" value="ECO:0007669"/>
    <property type="project" value="Ensembl"/>
</dbReference>
<dbReference type="GO" id="GO:0006508">
    <property type="term" value="P:proteolysis"/>
    <property type="evidence" value="ECO:0000304"/>
    <property type="project" value="ProtInc"/>
</dbReference>
<dbReference type="GO" id="GO:0070173">
    <property type="term" value="P:regulation of enamel mineralization"/>
    <property type="evidence" value="ECO:0000304"/>
    <property type="project" value="BHF-UCL"/>
</dbReference>
<dbReference type="CDD" id="cd00094">
    <property type="entry name" value="HX"/>
    <property type="match status" value="1"/>
</dbReference>
<dbReference type="CDD" id="cd04278">
    <property type="entry name" value="ZnMc_MMP"/>
    <property type="match status" value="1"/>
</dbReference>
<dbReference type="FunFam" id="3.40.390.10:FF:000007">
    <property type="entry name" value="Collagenase 3"/>
    <property type="match status" value="1"/>
</dbReference>
<dbReference type="FunFam" id="2.110.10.10:FF:000002">
    <property type="entry name" value="Matrix metallopeptidase 3"/>
    <property type="match status" value="1"/>
</dbReference>
<dbReference type="Gene3D" id="3.40.390.10">
    <property type="entry name" value="Collagenase (Catalytic Domain)"/>
    <property type="match status" value="1"/>
</dbReference>
<dbReference type="Gene3D" id="2.110.10.10">
    <property type="entry name" value="Hemopexin-like domain"/>
    <property type="match status" value="1"/>
</dbReference>
<dbReference type="InterPro" id="IPR000585">
    <property type="entry name" value="Hemopexin-like_dom"/>
</dbReference>
<dbReference type="InterPro" id="IPR036375">
    <property type="entry name" value="Hemopexin-like_dom_sf"/>
</dbReference>
<dbReference type="InterPro" id="IPR018487">
    <property type="entry name" value="Hemopexin-like_repeat"/>
</dbReference>
<dbReference type="InterPro" id="IPR033739">
    <property type="entry name" value="M10A_MMP"/>
</dbReference>
<dbReference type="InterPro" id="IPR024079">
    <property type="entry name" value="MetalloPept_cat_dom_sf"/>
</dbReference>
<dbReference type="InterPro" id="IPR001818">
    <property type="entry name" value="Pept_M10_metallopeptidase"/>
</dbReference>
<dbReference type="InterPro" id="IPR021190">
    <property type="entry name" value="Pept_M10A"/>
</dbReference>
<dbReference type="InterPro" id="IPR021158">
    <property type="entry name" value="Pept_M10A_Zn_BS"/>
</dbReference>
<dbReference type="InterPro" id="IPR006026">
    <property type="entry name" value="Peptidase_Metallo"/>
</dbReference>
<dbReference type="InterPro" id="IPR002477">
    <property type="entry name" value="Peptidoglycan-bd-like"/>
</dbReference>
<dbReference type="InterPro" id="IPR036365">
    <property type="entry name" value="PGBD-like_sf"/>
</dbReference>
<dbReference type="PANTHER" id="PTHR10201">
    <property type="entry name" value="MATRIX METALLOPROTEINASE"/>
    <property type="match status" value="1"/>
</dbReference>
<dbReference type="PANTHER" id="PTHR10201:SF125">
    <property type="entry name" value="MATRIX METALLOPROTEINASE-20"/>
    <property type="match status" value="1"/>
</dbReference>
<dbReference type="Pfam" id="PF00045">
    <property type="entry name" value="Hemopexin"/>
    <property type="match status" value="3"/>
</dbReference>
<dbReference type="Pfam" id="PF00413">
    <property type="entry name" value="Peptidase_M10"/>
    <property type="match status" value="1"/>
</dbReference>
<dbReference type="Pfam" id="PF01471">
    <property type="entry name" value="PG_binding_1"/>
    <property type="match status" value="1"/>
</dbReference>
<dbReference type="PIRSF" id="PIRSF001191">
    <property type="entry name" value="Peptidase_M10A_matrix"/>
    <property type="match status" value="1"/>
</dbReference>
<dbReference type="PRINTS" id="PR00138">
    <property type="entry name" value="MATRIXIN"/>
</dbReference>
<dbReference type="SMART" id="SM00120">
    <property type="entry name" value="HX"/>
    <property type="match status" value="4"/>
</dbReference>
<dbReference type="SMART" id="SM00235">
    <property type="entry name" value="ZnMc"/>
    <property type="match status" value="1"/>
</dbReference>
<dbReference type="SUPFAM" id="SSF50923">
    <property type="entry name" value="Hemopexin-like domain"/>
    <property type="match status" value="1"/>
</dbReference>
<dbReference type="SUPFAM" id="SSF55486">
    <property type="entry name" value="Metalloproteases ('zincins'), catalytic domain"/>
    <property type="match status" value="1"/>
</dbReference>
<dbReference type="SUPFAM" id="SSF47090">
    <property type="entry name" value="PGBD-like"/>
    <property type="match status" value="1"/>
</dbReference>
<dbReference type="PROSITE" id="PS00546">
    <property type="entry name" value="CYSTEINE_SWITCH"/>
    <property type="match status" value="1"/>
</dbReference>
<dbReference type="PROSITE" id="PS51642">
    <property type="entry name" value="HEMOPEXIN_2"/>
    <property type="match status" value="4"/>
</dbReference>
<dbReference type="PROSITE" id="PS00142">
    <property type="entry name" value="ZINC_PROTEASE"/>
    <property type="match status" value="1"/>
</dbReference>
<proteinExistence type="evidence at protein level"/>